<name>ALR_MANSM</name>
<keyword id="KW-0413">Isomerase</keyword>
<keyword id="KW-0663">Pyridoxal phosphate</keyword>
<reference key="1">
    <citation type="journal article" date="2004" name="Nat. Biotechnol.">
        <title>The genome sequence of the capnophilic rumen bacterium Mannheimia succiniciproducens.</title>
        <authorList>
            <person name="Hong S.H."/>
            <person name="Kim J.S."/>
            <person name="Lee S.Y."/>
            <person name="In Y.H."/>
            <person name="Choi S.S."/>
            <person name="Rih J.-K."/>
            <person name="Kim C.H."/>
            <person name="Jeong H."/>
            <person name="Hur C.G."/>
            <person name="Kim J.J."/>
        </authorList>
    </citation>
    <scope>NUCLEOTIDE SEQUENCE [LARGE SCALE GENOMIC DNA]</scope>
    <source>
        <strain>KCTC 0769BP / MBEL55E</strain>
    </source>
</reference>
<organism>
    <name type="scientific">Mannheimia succiniciproducens (strain KCTC 0769BP / MBEL55E)</name>
    <dbReference type="NCBI Taxonomy" id="221988"/>
    <lineage>
        <taxon>Bacteria</taxon>
        <taxon>Pseudomonadati</taxon>
        <taxon>Pseudomonadota</taxon>
        <taxon>Gammaproteobacteria</taxon>
        <taxon>Pasteurellales</taxon>
        <taxon>Pasteurellaceae</taxon>
        <taxon>Basfia</taxon>
    </lineage>
</organism>
<comment type="function">
    <text evidence="1">Catalyzes the interconversion of L-alanine and D-alanine. May also act on other amino acids.</text>
</comment>
<comment type="catalytic activity">
    <reaction evidence="1">
        <text>L-alanine = D-alanine</text>
        <dbReference type="Rhea" id="RHEA:20249"/>
        <dbReference type="ChEBI" id="CHEBI:57416"/>
        <dbReference type="ChEBI" id="CHEBI:57972"/>
        <dbReference type="EC" id="5.1.1.1"/>
    </reaction>
</comment>
<comment type="cofactor">
    <cofactor evidence="1">
        <name>pyridoxal 5'-phosphate</name>
        <dbReference type="ChEBI" id="CHEBI:597326"/>
    </cofactor>
</comment>
<comment type="pathway">
    <text evidence="1">Amino-acid biosynthesis; D-alanine biosynthesis; D-alanine from L-alanine: step 1/1.</text>
</comment>
<comment type="similarity">
    <text evidence="1">Belongs to the alanine racemase family.</text>
</comment>
<accession>Q65TC1</accession>
<gene>
    <name type="primary">alr</name>
    <name type="ordered locus">MS1182</name>
</gene>
<evidence type="ECO:0000255" key="1">
    <source>
        <dbReference type="HAMAP-Rule" id="MF_01201"/>
    </source>
</evidence>
<feature type="chain" id="PRO_1000066007" description="Alanine racemase">
    <location>
        <begin position="1"/>
        <end position="357"/>
    </location>
</feature>
<feature type="active site" description="Proton acceptor; specific for D-alanine" evidence="1">
    <location>
        <position position="34"/>
    </location>
</feature>
<feature type="active site" description="Proton acceptor; specific for L-alanine" evidence="1">
    <location>
        <position position="253"/>
    </location>
</feature>
<feature type="binding site" evidence="1">
    <location>
        <position position="130"/>
    </location>
    <ligand>
        <name>substrate</name>
    </ligand>
</feature>
<feature type="binding site" evidence="1">
    <location>
        <position position="301"/>
    </location>
    <ligand>
        <name>substrate</name>
    </ligand>
</feature>
<feature type="modified residue" description="N6-(pyridoxal phosphate)lysine" evidence="1">
    <location>
        <position position="34"/>
    </location>
</feature>
<protein>
    <recommendedName>
        <fullName evidence="1">Alanine racemase</fullName>
        <ecNumber evidence="1">5.1.1.1</ecNumber>
    </recommendedName>
</protein>
<sequence>MKPATVKISSVALKHNIQIIKQKAPHSKIIAVVKANAYGHGVEFVSSTLENLVDGFGVARLAEALSVRSNGVTKPILLLEGFFSPKDLPILSVNNIQTVVHNQDQLDAIKRANLENPIKVWLKIDTGMHRLGVSLEEVDYYYNELMNCPNVDEVGFVSHFSRADETDSDYTNIQLNRFLDATKNKKGNRTIAASGGILFWEDSHLEYIRPGIIMYGVSPINIPSSEYGLIPVMTLTSSLIAVRDHKKGEPVGYGGIWVSERDTKIGVVAIGYGDGYPRNVPAGTPIYINGRRVPIVGRVSMDMVTVDLGPDCKDKVGDEAVLWGKELPIEEVAEITGLLSYELMTKLTPRVLTEYVD</sequence>
<proteinExistence type="inferred from homology"/>
<dbReference type="EC" id="5.1.1.1" evidence="1"/>
<dbReference type="EMBL" id="AE016827">
    <property type="protein sequence ID" value="AAU37789.1"/>
    <property type="molecule type" value="Genomic_DNA"/>
</dbReference>
<dbReference type="RefSeq" id="WP_011200356.1">
    <property type="nucleotide sequence ID" value="NC_006300.1"/>
</dbReference>
<dbReference type="SMR" id="Q65TC1"/>
<dbReference type="STRING" id="221988.MS1182"/>
<dbReference type="KEGG" id="msu:MS1182"/>
<dbReference type="eggNOG" id="COG0787">
    <property type="taxonomic scope" value="Bacteria"/>
</dbReference>
<dbReference type="HOGENOM" id="CLU_028393_1_0_6"/>
<dbReference type="OrthoDB" id="9813814at2"/>
<dbReference type="UniPathway" id="UPA00042">
    <property type="reaction ID" value="UER00497"/>
</dbReference>
<dbReference type="Proteomes" id="UP000000607">
    <property type="component" value="Chromosome"/>
</dbReference>
<dbReference type="GO" id="GO:0005829">
    <property type="term" value="C:cytosol"/>
    <property type="evidence" value="ECO:0007669"/>
    <property type="project" value="TreeGrafter"/>
</dbReference>
<dbReference type="GO" id="GO:0008784">
    <property type="term" value="F:alanine racemase activity"/>
    <property type="evidence" value="ECO:0007669"/>
    <property type="project" value="UniProtKB-UniRule"/>
</dbReference>
<dbReference type="GO" id="GO:0030170">
    <property type="term" value="F:pyridoxal phosphate binding"/>
    <property type="evidence" value="ECO:0007669"/>
    <property type="project" value="UniProtKB-UniRule"/>
</dbReference>
<dbReference type="GO" id="GO:0030632">
    <property type="term" value="P:D-alanine biosynthetic process"/>
    <property type="evidence" value="ECO:0007669"/>
    <property type="project" value="UniProtKB-UniRule"/>
</dbReference>
<dbReference type="CDD" id="cd06827">
    <property type="entry name" value="PLPDE_III_AR_proteobact"/>
    <property type="match status" value="1"/>
</dbReference>
<dbReference type="FunFam" id="2.40.37.10:FF:000002">
    <property type="entry name" value="Alanine racemase"/>
    <property type="match status" value="1"/>
</dbReference>
<dbReference type="FunFam" id="3.20.20.10:FF:000002">
    <property type="entry name" value="Alanine racemase"/>
    <property type="match status" value="1"/>
</dbReference>
<dbReference type="Gene3D" id="3.20.20.10">
    <property type="entry name" value="Alanine racemase"/>
    <property type="match status" value="1"/>
</dbReference>
<dbReference type="Gene3D" id="2.40.37.10">
    <property type="entry name" value="Lyase, Ornithine Decarboxylase, Chain A, domain 1"/>
    <property type="match status" value="1"/>
</dbReference>
<dbReference type="HAMAP" id="MF_01201">
    <property type="entry name" value="Ala_racemase"/>
    <property type="match status" value="1"/>
</dbReference>
<dbReference type="InterPro" id="IPR000821">
    <property type="entry name" value="Ala_racemase"/>
</dbReference>
<dbReference type="InterPro" id="IPR009006">
    <property type="entry name" value="Ala_racemase/Decarboxylase_C"/>
</dbReference>
<dbReference type="InterPro" id="IPR011079">
    <property type="entry name" value="Ala_racemase_C"/>
</dbReference>
<dbReference type="InterPro" id="IPR001608">
    <property type="entry name" value="Ala_racemase_N"/>
</dbReference>
<dbReference type="InterPro" id="IPR020622">
    <property type="entry name" value="Ala_racemase_pyridoxalP-BS"/>
</dbReference>
<dbReference type="InterPro" id="IPR029066">
    <property type="entry name" value="PLP-binding_barrel"/>
</dbReference>
<dbReference type="NCBIfam" id="TIGR00492">
    <property type="entry name" value="alr"/>
    <property type="match status" value="1"/>
</dbReference>
<dbReference type="PANTHER" id="PTHR30511">
    <property type="entry name" value="ALANINE RACEMASE"/>
    <property type="match status" value="1"/>
</dbReference>
<dbReference type="PANTHER" id="PTHR30511:SF4">
    <property type="entry name" value="ALANINE RACEMASE, BIOSYNTHETIC"/>
    <property type="match status" value="1"/>
</dbReference>
<dbReference type="Pfam" id="PF00842">
    <property type="entry name" value="Ala_racemase_C"/>
    <property type="match status" value="1"/>
</dbReference>
<dbReference type="Pfam" id="PF01168">
    <property type="entry name" value="Ala_racemase_N"/>
    <property type="match status" value="1"/>
</dbReference>
<dbReference type="PRINTS" id="PR00992">
    <property type="entry name" value="ALARACEMASE"/>
</dbReference>
<dbReference type="SMART" id="SM01005">
    <property type="entry name" value="Ala_racemase_C"/>
    <property type="match status" value="1"/>
</dbReference>
<dbReference type="SUPFAM" id="SSF50621">
    <property type="entry name" value="Alanine racemase C-terminal domain-like"/>
    <property type="match status" value="1"/>
</dbReference>
<dbReference type="SUPFAM" id="SSF51419">
    <property type="entry name" value="PLP-binding barrel"/>
    <property type="match status" value="1"/>
</dbReference>
<dbReference type="PROSITE" id="PS00395">
    <property type="entry name" value="ALANINE_RACEMASE"/>
    <property type="match status" value="1"/>
</dbReference>